<name>FOLD_SHEPW</name>
<gene>
    <name evidence="1" type="primary">folD</name>
    <name type="ordered locus">swp_3263</name>
</gene>
<feature type="chain" id="PRO_1000196803" description="Bifunctional protein FolD">
    <location>
        <begin position="1"/>
        <end position="286"/>
    </location>
</feature>
<feature type="binding site" evidence="1">
    <location>
        <begin position="166"/>
        <end position="168"/>
    </location>
    <ligand>
        <name>NADP(+)</name>
        <dbReference type="ChEBI" id="CHEBI:58349"/>
    </ligand>
</feature>
<feature type="binding site" evidence="1">
    <location>
        <position position="232"/>
    </location>
    <ligand>
        <name>NADP(+)</name>
        <dbReference type="ChEBI" id="CHEBI:58349"/>
    </ligand>
</feature>
<evidence type="ECO:0000255" key="1">
    <source>
        <dbReference type="HAMAP-Rule" id="MF_01576"/>
    </source>
</evidence>
<protein>
    <recommendedName>
        <fullName evidence="1">Bifunctional protein FolD</fullName>
    </recommendedName>
    <domain>
        <recommendedName>
            <fullName evidence="1">Methylenetetrahydrofolate dehydrogenase</fullName>
            <ecNumber evidence="1">1.5.1.5</ecNumber>
        </recommendedName>
    </domain>
    <domain>
        <recommendedName>
            <fullName evidence="1">Methenyltetrahydrofolate cyclohydrolase</fullName>
            <ecNumber evidence="1">3.5.4.9</ecNumber>
        </recommendedName>
    </domain>
</protein>
<comment type="function">
    <text evidence="1">Catalyzes the oxidation of 5,10-methylenetetrahydrofolate to 5,10-methenyltetrahydrofolate and then the hydrolysis of 5,10-methenyltetrahydrofolate to 10-formyltetrahydrofolate.</text>
</comment>
<comment type="catalytic activity">
    <reaction evidence="1">
        <text>(6R)-5,10-methylene-5,6,7,8-tetrahydrofolate + NADP(+) = (6R)-5,10-methenyltetrahydrofolate + NADPH</text>
        <dbReference type="Rhea" id="RHEA:22812"/>
        <dbReference type="ChEBI" id="CHEBI:15636"/>
        <dbReference type="ChEBI" id="CHEBI:57455"/>
        <dbReference type="ChEBI" id="CHEBI:57783"/>
        <dbReference type="ChEBI" id="CHEBI:58349"/>
        <dbReference type="EC" id="1.5.1.5"/>
    </reaction>
</comment>
<comment type="catalytic activity">
    <reaction evidence="1">
        <text>(6R)-5,10-methenyltetrahydrofolate + H2O = (6R)-10-formyltetrahydrofolate + H(+)</text>
        <dbReference type="Rhea" id="RHEA:23700"/>
        <dbReference type="ChEBI" id="CHEBI:15377"/>
        <dbReference type="ChEBI" id="CHEBI:15378"/>
        <dbReference type="ChEBI" id="CHEBI:57455"/>
        <dbReference type="ChEBI" id="CHEBI:195366"/>
        <dbReference type="EC" id="3.5.4.9"/>
    </reaction>
</comment>
<comment type="pathway">
    <text evidence="1">One-carbon metabolism; tetrahydrofolate interconversion.</text>
</comment>
<comment type="subunit">
    <text evidence="1">Homodimer.</text>
</comment>
<comment type="similarity">
    <text evidence="1">Belongs to the tetrahydrofolate dehydrogenase/cyclohydrolase family.</text>
</comment>
<reference key="1">
    <citation type="journal article" date="2008" name="PLoS ONE">
        <title>Environmental adaptation: genomic analysis of the piezotolerant and psychrotolerant deep-sea iron reducing bacterium Shewanella piezotolerans WP3.</title>
        <authorList>
            <person name="Wang F."/>
            <person name="Wang J."/>
            <person name="Jian H."/>
            <person name="Zhang B."/>
            <person name="Li S."/>
            <person name="Wang F."/>
            <person name="Zeng X."/>
            <person name="Gao L."/>
            <person name="Bartlett D.H."/>
            <person name="Yu J."/>
            <person name="Hu S."/>
            <person name="Xiao X."/>
        </authorList>
    </citation>
    <scope>NUCLEOTIDE SEQUENCE [LARGE SCALE GENOMIC DNA]</scope>
    <source>
        <strain>WP3 / JCM 13877</strain>
    </source>
</reference>
<dbReference type="EC" id="1.5.1.5" evidence="1"/>
<dbReference type="EC" id="3.5.4.9" evidence="1"/>
<dbReference type="EMBL" id="CP000472">
    <property type="protein sequence ID" value="ACJ29967.1"/>
    <property type="molecule type" value="Genomic_DNA"/>
</dbReference>
<dbReference type="RefSeq" id="WP_020913317.1">
    <property type="nucleotide sequence ID" value="NC_011566.1"/>
</dbReference>
<dbReference type="SMR" id="B8CRF9"/>
<dbReference type="STRING" id="225849.swp_3263"/>
<dbReference type="KEGG" id="swp:swp_3263"/>
<dbReference type="eggNOG" id="COG0190">
    <property type="taxonomic scope" value="Bacteria"/>
</dbReference>
<dbReference type="HOGENOM" id="CLU_034045_2_1_6"/>
<dbReference type="OrthoDB" id="9803580at2"/>
<dbReference type="UniPathway" id="UPA00193"/>
<dbReference type="Proteomes" id="UP000000753">
    <property type="component" value="Chromosome"/>
</dbReference>
<dbReference type="GO" id="GO:0005829">
    <property type="term" value="C:cytosol"/>
    <property type="evidence" value="ECO:0007669"/>
    <property type="project" value="TreeGrafter"/>
</dbReference>
<dbReference type="GO" id="GO:0004477">
    <property type="term" value="F:methenyltetrahydrofolate cyclohydrolase activity"/>
    <property type="evidence" value="ECO:0007669"/>
    <property type="project" value="UniProtKB-UniRule"/>
</dbReference>
<dbReference type="GO" id="GO:0004488">
    <property type="term" value="F:methylenetetrahydrofolate dehydrogenase (NADP+) activity"/>
    <property type="evidence" value="ECO:0007669"/>
    <property type="project" value="UniProtKB-UniRule"/>
</dbReference>
<dbReference type="GO" id="GO:0000105">
    <property type="term" value="P:L-histidine biosynthetic process"/>
    <property type="evidence" value="ECO:0007669"/>
    <property type="project" value="UniProtKB-KW"/>
</dbReference>
<dbReference type="GO" id="GO:0009086">
    <property type="term" value="P:methionine biosynthetic process"/>
    <property type="evidence" value="ECO:0007669"/>
    <property type="project" value="UniProtKB-KW"/>
</dbReference>
<dbReference type="GO" id="GO:0006164">
    <property type="term" value="P:purine nucleotide biosynthetic process"/>
    <property type="evidence" value="ECO:0007669"/>
    <property type="project" value="UniProtKB-KW"/>
</dbReference>
<dbReference type="GO" id="GO:0035999">
    <property type="term" value="P:tetrahydrofolate interconversion"/>
    <property type="evidence" value="ECO:0007669"/>
    <property type="project" value="UniProtKB-UniRule"/>
</dbReference>
<dbReference type="CDD" id="cd01080">
    <property type="entry name" value="NAD_bind_m-THF_DH_Cyclohyd"/>
    <property type="match status" value="1"/>
</dbReference>
<dbReference type="FunFam" id="3.40.50.10860:FF:000001">
    <property type="entry name" value="Bifunctional protein FolD"/>
    <property type="match status" value="1"/>
</dbReference>
<dbReference type="FunFam" id="3.40.50.720:FF:000006">
    <property type="entry name" value="Bifunctional protein FolD"/>
    <property type="match status" value="1"/>
</dbReference>
<dbReference type="Gene3D" id="3.40.50.10860">
    <property type="entry name" value="Leucine Dehydrogenase, chain A, domain 1"/>
    <property type="match status" value="1"/>
</dbReference>
<dbReference type="Gene3D" id="3.40.50.720">
    <property type="entry name" value="NAD(P)-binding Rossmann-like Domain"/>
    <property type="match status" value="1"/>
</dbReference>
<dbReference type="HAMAP" id="MF_01576">
    <property type="entry name" value="THF_DHG_CYH"/>
    <property type="match status" value="1"/>
</dbReference>
<dbReference type="InterPro" id="IPR046346">
    <property type="entry name" value="Aminoacid_DH-like_N_sf"/>
</dbReference>
<dbReference type="InterPro" id="IPR036291">
    <property type="entry name" value="NAD(P)-bd_dom_sf"/>
</dbReference>
<dbReference type="InterPro" id="IPR000672">
    <property type="entry name" value="THF_DH/CycHdrlase"/>
</dbReference>
<dbReference type="InterPro" id="IPR020630">
    <property type="entry name" value="THF_DH/CycHdrlase_cat_dom"/>
</dbReference>
<dbReference type="InterPro" id="IPR020867">
    <property type="entry name" value="THF_DH/CycHdrlase_CS"/>
</dbReference>
<dbReference type="InterPro" id="IPR020631">
    <property type="entry name" value="THF_DH/CycHdrlase_NAD-bd_dom"/>
</dbReference>
<dbReference type="NCBIfam" id="NF008058">
    <property type="entry name" value="PRK10792.1"/>
    <property type="match status" value="1"/>
</dbReference>
<dbReference type="NCBIfam" id="NF010783">
    <property type="entry name" value="PRK14186.1"/>
    <property type="match status" value="1"/>
</dbReference>
<dbReference type="PANTHER" id="PTHR48099:SF5">
    <property type="entry name" value="C-1-TETRAHYDROFOLATE SYNTHASE, CYTOPLASMIC"/>
    <property type="match status" value="1"/>
</dbReference>
<dbReference type="PANTHER" id="PTHR48099">
    <property type="entry name" value="C-1-TETRAHYDROFOLATE SYNTHASE, CYTOPLASMIC-RELATED"/>
    <property type="match status" value="1"/>
</dbReference>
<dbReference type="Pfam" id="PF00763">
    <property type="entry name" value="THF_DHG_CYH"/>
    <property type="match status" value="1"/>
</dbReference>
<dbReference type="Pfam" id="PF02882">
    <property type="entry name" value="THF_DHG_CYH_C"/>
    <property type="match status" value="1"/>
</dbReference>
<dbReference type="PRINTS" id="PR00085">
    <property type="entry name" value="THFDHDRGNASE"/>
</dbReference>
<dbReference type="SUPFAM" id="SSF53223">
    <property type="entry name" value="Aminoacid dehydrogenase-like, N-terminal domain"/>
    <property type="match status" value="1"/>
</dbReference>
<dbReference type="SUPFAM" id="SSF51735">
    <property type="entry name" value="NAD(P)-binding Rossmann-fold domains"/>
    <property type="match status" value="1"/>
</dbReference>
<dbReference type="PROSITE" id="PS00767">
    <property type="entry name" value="THF_DHG_CYH_2"/>
    <property type="match status" value="1"/>
</dbReference>
<accession>B8CRF9</accession>
<proteinExistence type="inferred from homology"/>
<sequence>MTAQNIDGKAIAQAIRTKLKDKVTARKEAGQRVPGLAVILVGADPASQVYVGSKRRACEELGFISRSYDLDSSTSEDALLSLIDECNEDQSIDGILVQLPLPEHIEESKVIERIRPDKDVDGFHPYNVGRLAQRIPVLRSCTPMGIMTLIQSTGVDTYGLDAVVVGASNIVGRPMSLELLLAGCTTTTCHRFTRNLEQKVRQADLVVVAVGKPGFIPGEWIKPGAIVIDVGINRLESGQLVGDVQFEKAAENASFITPVPGGVGPMTIASLLENTLYACEQYHDHD</sequence>
<keyword id="KW-0028">Amino-acid biosynthesis</keyword>
<keyword id="KW-0368">Histidine biosynthesis</keyword>
<keyword id="KW-0378">Hydrolase</keyword>
<keyword id="KW-0486">Methionine biosynthesis</keyword>
<keyword id="KW-0511">Multifunctional enzyme</keyword>
<keyword id="KW-0521">NADP</keyword>
<keyword id="KW-0554">One-carbon metabolism</keyword>
<keyword id="KW-0560">Oxidoreductase</keyword>
<keyword id="KW-0658">Purine biosynthesis</keyword>
<organism>
    <name type="scientific">Shewanella piezotolerans (strain WP3 / JCM 13877)</name>
    <dbReference type="NCBI Taxonomy" id="225849"/>
    <lineage>
        <taxon>Bacteria</taxon>
        <taxon>Pseudomonadati</taxon>
        <taxon>Pseudomonadota</taxon>
        <taxon>Gammaproteobacteria</taxon>
        <taxon>Alteromonadales</taxon>
        <taxon>Shewanellaceae</taxon>
        <taxon>Shewanella</taxon>
    </lineage>
</organism>